<reference key="1">
    <citation type="journal article" date="2004" name="J. Infect. Dis.">
        <title>Progress toward characterization of the group A Streptococcus metagenome: complete genome sequence of a macrolide-resistant serotype M6 strain.</title>
        <authorList>
            <person name="Banks D.J."/>
            <person name="Porcella S.F."/>
            <person name="Barbian K.D."/>
            <person name="Beres S.B."/>
            <person name="Philips L.E."/>
            <person name="Voyich J.M."/>
            <person name="DeLeo F.R."/>
            <person name="Martin J.M."/>
            <person name="Somerville G.A."/>
            <person name="Musser J.M."/>
        </authorList>
    </citation>
    <scope>NUCLEOTIDE SEQUENCE [LARGE SCALE GENOMIC DNA]</scope>
    <source>
        <strain>ATCC BAA-946 / MGAS10394</strain>
    </source>
</reference>
<reference key="2">
    <citation type="submission" date="2000-05" db="UniProtKB">
        <title>Two-dimensional gel electrophoresis map of Streptococcus pyogenes proteins.</title>
        <authorList>
            <person name="Hogan D.A."/>
            <person name="Du P."/>
            <person name="Stevenson T.I."/>
            <person name="Whitton M."/>
            <person name="Kilby G.W."/>
            <person name="Rogers J."/>
            <person name="VanBogelen R.A."/>
        </authorList>
    </citation>
    <scope>PROTEIN SEQUENCE OF 47-55; 95-118 AND 180-190</scope>
    <scope>MASS SPECTROMETRY</scope>
    <source>
        <strain>JRS4 / Serotype M6</strain>
    </source>
</reference>
<sequence length="190" mass="22055">MAVFNKLFKRRHSVSEEIKKDDLQEEVEATETEETVEEVIEETPEKSELELANERADEFENKYLRAHAEMQNIQRRSSEERQQLQRYRSQDLAKAILPSLDNLERALAVEGLTDDVKKGLEMTRDSLIQALKEEGVEEVEVDSFDHNFHMAVQTLPADDEHPADSIAEVFQKGYKLHERLLRPAMVVVYN</sequence>
<name>GRPE_STRP6</name>
<gene>
    <name type="primary">grpE</name>
    <name type="ordered locus">M6_Spy1493</name>
</gene>
<feature type="chain" id="PRO_0000113875" description="Protein GrpE">
    <location>
        <begin position="1"/>
        <end position="190"/>
    </location>
</feature>
<feature type="region of interest" description="Disordered" evidence="2">
    <location>
        <begin position="21"/>
        <end position="49"/>
    </location>
</feature>
<feature type="compositionally biased region" description="Acidic residues" evidence="2">
    <location>
        <begin position="23"/>
        <end position="42"/>
    </location>
</feature>
<accession>Q5XAD5</accession>
<accession>P63190</accession>
<accession>P82581</accession>
<accession>Q99YC8</accession>
<evidence type="ECO:0000250" key="1"/>
<evidence type="ECO:0000256" key="2">
    <source>
        <dbReference type="SAM" id="MobiDB-lite"/>
    </source>
</evidence>
<evidence type="ECO:0000269" key="3">
    <source ref="2"/>
</evidence>
<evidence type="ECO:0000305" key="4"/>
<protein>
    <recommendedName>
        <fullName>Protein GrpE</fullName>
    </recommendedName>
    <alternativeName>
        <fullName>HSP-70 cofactor</fullName>
    </alternativeName>
</protein>
<comment type="function">
    <text evidence="1">Participates actively in the response to hyperosmotic and heat shock by preventing the aggregation of stress-denatured proteins, in association with DnaK and GrpE. It is the nucleotide exchange factor for DnaK and may function as a thermosensor. Unfolded proteins bind initially to DnaJ; upon interaction with the DnaJ-bound protein, DnaK hydrolyzes its bound ATP, resulting in the formation of a stable complex. GrpE releases ADP from DnaK; ATP binding to DnaK triggers the release of the substrate protein, thus completing the reaction cycle. Several rounds of ATP-dependent interactions between DnaJ, DnaK and GrpE are required for fully efficient folding (By similarity).</text>
</comment>
<comment type="subunit">
    <text evidence="1">Homodimer.</text>
</comment>
<comment type="subcellular location">
    <subcellularLocation>
        <location evidence="4">Cytoplasm</location>
    </subcellularLocation>
</comment>
<comment type="mass spectrometry" mass="22054.54" method="Electrospray" evidence="3"/>
<comment type="similarity">
    <text evidence="4">Belongs to the GrpE family.</text>
</comment>
<keyword id="KW-0143">Chaperone</keyword>
<keyword id="KW-0963">Cytoplasm</keyword>
<keyword id="KW-0903">Direct protein sequencing</keyword>
<keyword id="KW-0346">Stress response</keyword>
<organism>
    <name type="scientific">Streptococcus pyogenes serotype M6 (strain ATCC BAA-946 / MGAS10394)</name>
    <dbReference type="NCBI Taxonomy" id="286636"/>
    <lineage>
        <taxon>Bacteria</taxon>
        <taxon>Bacillati</taxon>
        <taxon>Bacillota</taxon>
        <taxon>Bacilli</taxon>
        <taxon>Lactobacillales</taxon>
        <taxon>Streptococcaceae</taxon>
        <taxon>Streptococcus</taxon>
    </lineage>
</organism>
<dbReference type="EMBL" id="CP000003">
    <property type="protein sequence ID" value="AAT87628.1"/>
    <property type="molecule type" value="Genomic_DNA"/>
</dbReference>
<dbReference type="RefSeq" id="WP_002983313.1">
    <property type="nucleotide sequence ID" value="NC_006086.1"/>
</dbReference>
<dbReference type="SMR" id="Q5XAD5"/>
<dbReference type="GeneID" id="69900393"/>
<dbReference type="KEGG" id="spa:M6_Spy1493"/>
<dbReference type="HOGENOM" id="CLU_057217_6_3_9"/>
<dbReference type="Proteomes" id="UP000001167">
    <property type="component" value="Chromosome"/>
</dbReference>
<dbReference type="GO" id="GO:0005737">
    <property type="term" value="C:cytoplasm"/>
    <property type="evidence" value="ECO:0007669"/>
    <property type="project" value="UniProtKB-SubCell"/>
</dbReference>
<dbReference type="GO" id="GO:0000774">
    <property type="term" value="F:adenyl-nucleotide exchange factor activity"/>
    <property type="evidence" value="ECO:0007669"/>
    <property type="project" value="InterPro"/>
</dbReference>
<dbReference type="GO" id="GO:0042803">
    <property type="term" value="F:protein homodimerization activity"/>
    <property type="evidence" value="ECO:0007669"/>
    <property type="project" value="InterPro"/>
</dbReference>
<dbReference type="GO" id="GO:0051087">
    <property type="term" value="F:protein-folding chaperone binding"/>
    <property type="evidence" value="ECO:0007669"/>
    <property type="project" value="InterPro"/>
</dbReference>
<dbReference type="GO" id="GO:0051082">
    <property type="term" value="F:unfolded protein binding"/>
    <property type="evidence" value="ECO:0007669"/>
    <property type="project" value="TreeGrafter"/>
</dbReference>
<dbReference type="GO" id="GO:0006457">
    <property type="term" value="P:protein folding"/>
    <property type="evidence" value="ECO:0007669"/>
    <property type="project" value="InterPro"/>
</dbReference>
<dbReference type="CDD" id="cd00446">
    <property type="entry name" value="GrpE"/>
    <property type="match status" value="1"/>
</dbReference>
<dbReference type="Gene3D" id="3.90.20.20">
    <property type="match status" value="1"/>
</dbReference>
<dbReference type="Gene3D" id="2.30.22.10">
    <property type="entry name" value="Head domain of nucleotide exchange factor GrpE"/>
    <property type="match status" value="1"/>
</dbReference>
<dbReference type="HAMAP" id="MF_01151">
    <property type="entry name" value="GrpE"/>
    <property type="match status" value="1"/>
</dbReference>
<dbReference type="InterPro" id="IPR000740">
    <property type="entry name" value="GrpE"/>
</dbReference>
<dbReference type="InterPro" id="IPR013805">
    <property type="entry name" value="GrpE_coiled_coil"/>
</dbReference>
<dbReference type="InterPro" id="IPR009012">
    <property type="entry name" value="GrpE_head"/>
</dbReference>
<dbReference type="NCBIfam" id="NF010738">
    <property type="entry name" value="PRK14140.1"/>
    <property type="match status" value="1"/>
</dbReference>
<dbReference type="NCBIfam" id="NF010753">
    <property type="entry name" value="PRK14156.1"/>
    <property type="match status" value="1"/>
</dbReference>
<dbReference type="PANTHER" id="PTHR21237">
    <property type="entry name" value="GRPE PROTEIN"/>
    <property type="match status" value="1"/>
</dbReference>
<dbReference type="PANTHER" id="PTHR21237:SF23">
    <property type="entry name" value="GRPE PROTEIN HOMOLOG, MITOCHONDRIAL"/>
    <property type="match status" value="1"/>
</dbReference>
<dbReference type="Pfam" id="PF01025">
    <property type="entry name" value="GrpE"/>
    <property type="match status" value="1"/>
</dbReference>
<dbReference type="PRINTS" id="PR00773">
    <property type="entry name" value="GRPEPROTEIN"/>
</dbReference>
<dbReference type="SUPFAM" id="SSF58014">
    <property type="entry name" value="Coiled-coil domain of nucleotide exchange factor GrpE"/>
    <property type="match status" value="1"/>
</dbReference>
<dbReference type="SUPFAM" id="SSF51064">
    <property type="entry name" value="Head domain of nucleotide exchange factor GrpE"/>
    <property type="match status" value="1"/>
</dbReference>
<dbReference type="PROSITE" id="PS01071">
    <property type="entry name" value="GRPE"/>
    <property type="match status" value="1"/>
</dbReference>
<proteinExistence type="evidence at protein level"/>